<keyword id="KW-0131">Cell cycle</keyword>
<keyword id="KW-0217">Developmental protein</keyword>
<keyword id="KW-0469">Meiosis</keyword>
<keyword id="KW-0507">mRNA processing</keyword>
<keyword id="KW-0539">Nucleus</keyword>
<keyword id="KW-1185">Reference proteome</keyword>
<organism>
    <name type="scientific">Xenopus laevis</name>
    <name type="common">African clawed frog</name>
    <dbReference type="NCBI Taxonomy" id="8355"/>
    <lineage>
        <taxon>Eukaryota</taxon>
        <taxon>Metazoa</taxon>
        <taxon>Chordata</taxon>
        <taxon>Craniata</taxon>
        <taxon>Vertebrata</taxon>
        <taxon>Euteleostomi</taxon>
        <taxon>Amphibia</taxon>
        <taxon>Batrachia</taxon>
        <taxon>Anura</taxon>
        <taxon>Pipoidea</taxon>
        <taxon>Pipidae</taxon>
        <taxon>Xenopodinae</taxon>
        <taxon>Xenopus</taxon>
        <taxon>Xenopus</taxon>
    </lineage>
</organism>
<name>SPD1A_XENLA</name>
<accession>Q9PU13</accession>
<accession>Q6NUF2</accession>
<accession>Q9W6Z0</accession>
<comment type="function">
    <text evidence="3 4 5 6">Stimulates oocyte maturation by promoting meiotic G2/M progression in resting oocytes, via activation of the MAPK cascade and cdc2-cyclin B. Also activates the kinase activity of cdk2; this activation does not appear necessary for oocyte maturation. Necessary for polyadenylation in oocytes.</text>
</comment>
<comment type="subunit">
    <text evidence="4 6">Interacts with cdk2. Interacts independently with cdk1 and with the cyclin B proteins ccnb1 and ccnb2, but doesn't interact with a cdc2-cyclin B complex. Prior to oocyte maturation, the mRNA is found in a complex with dazl and pum2 proteins; pum2 dissociates from the complex during maturation.</text>
</comment>
<comment type="subcellular location">
    <subcellularLocation>
        <location evidence="2">Nucleus</location>
    </subcellularLocation>
</comment>
<comment type="domain">
    <text evidence="1">The C-terminus is required for CDK2-activation, but not CDK2-binding.</text>
</comment>
<comment type="similarity">
    <text evidence="7">Belongs to the Speedy/Ringo family.</text>
</comment>
<comment type="sequence caution" evidence="7">
    <conflict type="erroneous initiation">
        <sequence resource="EMBL-CDS" id="AAH68639"/>
    </conflict>
    <text>Truncated N-terminus.</text>
</comment>
<gene>
    <name type="primary">spdya-a</name>
    <name evidence="9" type="synonym">ls26</name>
    <name evidence="3" type="synonym">spdy1</name>
</gene>
<dbReference type="EMBL" id="AJ249978">
    <property type="protein sequence ID" value="CAB58366.1"/>
    <property type="molecule type" value="mRNA"/>
</dbReference>
<dbReference type="EMBL" id="AJ133499">
    <property type="protein sequence ID" value="CAB44295.1"/>
    <property type="molecule type" value="mRNA"/>
</dbReference>
<dbReference type="EMBL" id="BC068639">
    <property type="protein sequence ID" value="AAH68639.1"/>
    <property type="status" value="ALT_INIT"/>
    <property type="molecule type" value="mRNA"/>
</dbReference>
<dbReference type="RefSeq" id="NP_001081714.1">
    <property type="nucleotide sequence ID" value="NM_001088245.1"/>
</dbReference>
<dbReference type="SMR" id="Q9PU13"/>
<dbReference type="BioGRID" id="99347">
    <property type="interactions" value="4"/>
</dbReference>
<dbReference type="MINT" id="Q9PU13"/>
<dbReference type="iPTMnet" id="Q9PU13"/>
<dbReference type="DNASU" id="398012"/>
<dbReference type="GeneID" id="398012"/>
<dbReference type="KEGG" id="xla:398012"/>
<dbReference type="AGR" id="Xenbase:XB-GENE-6252056"/>
<dbReference type="CTD" id="398012"/>
<dbReference type="Xenbase" id="XB-GENE-6252056">
    <property type="gene designation" value="spdyc.S"/>
</dbReference>
<dbReference type="OrthoDB" id="9442170at2759"/>
<dbReference type="Proteomes" id="UP000186698">
    <property type="component" value="Chromosome 4S"/>
</dbReference>
<dbReference type="Bgee" id="398012">
    <property type="expression patterns" value="Expressed in oocyte and 8 other cell types or tissues"/>
</dbReference>
<dbReference type="GO" id="GO:0005634">
    <property type="term" value="C:nucleus"/>
    <property type="evidence" value="ECO:0000250"/>
    <property type="project" value="UniProtKB"/>
</dbReference>
<dbReference type="GO" id="GO:0030332">
    <property type="term" value="F:cyclin binding"/>
    <property type="evidence" value="ECO:0000353"/>
    <property type="project" value="UniProtKB"/>
</dbReference>
<dbReference type="GO" id="GO:0019901">
    <property type="term" value="F:protein kinase binding"/>
    <property type="evidence" value="ECO:0000353"/>
    <property type="project" value="UniProtKB"/>
</dbReference>
<dbReference type="GO" id="GO:0008315">
    <property type="term" value="P:G2/MI transition of meiotic cell cycle"/>
    <property type="evidence" value="ECO:0000315"/>
    <property type="project" value="UniProtKB"/>
</dbReference>
<dbReference type="GO" id="GO:0006397">
    <property type="term" value="P:mRNA processing"/>
    <property type="evidence" value="ECO:0007669"/>
    <property type="project" value="UniProtKB-KW"/>
</dbReference>
<dbReference type="GO" id="GO:0001556">
    <property type="term" value="P:oocyte maturation"/>
    <property type="evidence" value="ECO:0000314"/>
    <property type="project" value="UniProtKB"/>
</dbReference>
<dbReference type="GO" id="GO:0045737">
    <property type="term" value="P:positive regulation of cyclin-dependent protein serine/threonine kinase activity"/>
    <property type="evidence" value="ECO:0000250"/>
    <property type="project" value="UniProtKB"/>
</dbReference>
<dbReference type="GO" id="GO:0043410">
    <property type="term" value="P:positive regulation of MAPK cascade"/>
    <property type="evidence" value="ECO:0000315"/>
    <property type="project" value="UniProtKB"/>
</dbReference>
<dbReference type="GO" id="GO:0051446">
    <property type="term" value="P:positive regulation of meiotic cell cycle"/>
    <property type="evidence" value="ECO:0000315"/>
    <property type="project" value="UniProtKB"/>
</dbReference>
<dbReference type="InterPro" id="IPR020984">
    <property type="entry name" value="Speedy"/>
</dbReference>
<dbReference type="InterPro" id="IPR052316">
    <property type="entry name" value="Speedy-Ringo_regulator"/>
</dbReference>
<dbReference type="PANTHER" id="PTHR31545">
    <property type="entry name" value="SEEDY PROTEIN A/C FAMILY MEMBER"/>
    <property type="match status" value="1"/>
</dbReference>
<dbReference type="PANTHER" id="PTHR31545:SF2">
    <property type="entry name" value="SPEEDY PROTEIN C"/>
    <property type="match status" value="1"/>
</dbReference>
<dbReference type="Pfam" id="PF11357">
    <property type="entry name" value="Spy1"/>
    <property type="match status" value="1"/>
</dbReference>
<protein>
    <recommendedName>
        <fullName>Speedy protein 1-A</fullName>
        <shortName>Spy1-A</shortName>
    </recommendedName>
    <alternativeName>
        <fullName>Protein Ls26</fullName>
    </alternativeName>
    <alternativeName>
        <fullName>Rapid inducer of G2/M progression in oocytes A</fullName>
        <shortName>RINGO-A</shortName>
    </alternativeName>
    <alternativeName>
        <fullName>XSpy1-A</fullName>
    </alternativeName>
    <alternativeName>
        <fullName>p33 ringo-A</fullName>
        <shortName>xRINGO-A</shortName>
    </alternativeName>
</protein>
<sequence length="299" mass="34688">MRHMQSVTRATSICGSGVKQVIGKGHPHARVVGARKARIPEREELSVKPKMVRNTHLNLQPQERQAFYRLLENEQIQEFLSMDSCLRISDKYLIAMVLAYFKRAGLYTSEYTTMNFFVALYLANDMEEDEEDYKYEIFPWALGDSWRELFPQFLRLRDDFWAKMNYRAVVSRRCCDEVMSKDPTHWAWLRDRPIHHSGAMRGYLRNEDDFSPRGPGLTPASCTLCHKAGVCDSGGVSHNNSSSPEQEIFHYTNREWSQELLMLSPELLLDPECTHDLHILQEPLVGLEPDGTALEWHHL</sequence>
<evidence type="ECO:0000250" key="1">
    <source>
        <dbReference type="UniProtKB" id="Q5IBH7"/>
    </source>
</evidence>
<evidence type="ECO:0000250" key="2">
    <source>
        <dbReference type="UniProtKB" id="Q5MJ70"/>
    </source>
</evidence>
<evidence type="ECO:0000250" key="3">
    <source>
        <dbReference type="UniProtKB" id="Q9YGL1"/>
    </source>
</evidence>
<evidence type="ECO:0000269" key="4">
    <source>
    </source>
</evidence>
<evidence type="ECO:0000269" key="5">
    <source>
    </source>
</evidence>
<evidence type="ECO:0000269" key="6">
    <source>
    </source>
</evidence>
<evidence type="ECO:0000305" key="7"/>
<evidence type="ECO:0000312" key="8">
    <source>
        <dbReference type="EMBL" id="AAH68639.1"/>
    </source>
</evidence>
<evidence type="ECO:0000312" key="9">
    <source>
        <dbReference type="EMBL" id="CAB58366.1"/>
    </source>
</evidence>
<proteinExistence type="evidence at protein level"/>
<feature type="chain" id="PRO_0000234117" description="Speedy protein 1-A">
    <location>
        <begin position="1"/>
        <end position="299"/>
    </location>
</feature>
<feature type="region of interest" description="Speedy/Ringo box; required for cdk-binding" evidence="1">
    <location>
        <begin position="61"/>
        <end position="193"/>
    </location>
</feature>
<feature type="sequence conflict" description="In Ref. 1; CAB44295." evidence="7" ref="1">
    <original>T</original>
    <variation>S</variation>
    <location>
        <position position="11"/>
    </location>
</feature>
<feature type="sequence conflict" description="In Ref. 1; CAB58366." evidence="7" ref="1">
    <original>R</original>
    <variation>Q</variation>
    <location>
        <position position="38"/>
    </location>
</feature>
<feature type="sequence conflict" description="In Ref. 1; CAB44295." evidence="7" ref="1">
    <original>R</original>
    <variation>RA</variation>
    <location>
        <position position="103"/>
    </location>
</feature>
<feature type="sequence conflict" description="In Ref. 1; CAB44295." evidence="7" ref="1">
    <original>I</original>
    <variation>M</variation>
    <location>
        <position position="194"/>
    </location>
</feature>
<feature type="sequence conflict" description="In Ref. 1; CAB44295." evidence="7" ref="1">
    <original>S</original>
    <variation>F</variation>
    <location>
        <position position="211"/>
    </location>
</feature>
<feature type="sequence conflict" description="In Ref. 1; CAB44295." evidence="7" ref="1">
    <original>S</original>
    <variation>P</variation>
    <location>
        <position position="264"/>
    </location>
</feature>
<reference evidence="7 9" key="1">
    <citation type="journal article" date="1999" name="Genes Dev.">
        <title>A novel p34cdc2 binding and activating protein that is necessary and sufficient to trigger G2/M progression in Xenopus oocytes.</title>
        <authorList>
            <person name="Ferby I."/>
            <person name="Blazquez M."/>
            <person name="Palmer A."/>
            <person name="Eritja R."/>
            <person name="Nebreda A.R."/>
        </authorList>
    </citation>
    <scope>NUCLEOTIDE SEQUENCE [MRNA]</scope>
    <scope>FUNCTION</scope>
    <scope>INTERACTION WITH CCNB1; CCNB2 AND CDK1</scope>
    <source>
        <tissue evidence="4">Oocyte</tissue>
    </source>
</reference>
<reference evidence="8" key="2">
    <citation type="submission" date="2004-04" db="EMBL/GenBank/DDBJ databases">
        <authorList>
            <consortium name="NIH - Xenopus Gene Collection (XGC) project"/>
        </authorList>
    </citation>
    <scope>NUCLEOTIDE SEQUENCE [LARGE SCALE MRNA]</scope>
    <source>
        <tissue evidence="8">Embryo</tissue>
    </source>
</reference>
<reference evidence="7" key="3">
    <citation type="journal article" date="2001" name="Biol. Cell">
        <title>RINGO efficiently triggers meiosis resumption in mouse oocytes and induces cell cycle arrest in embryos.</title>
        <authorList>
            <person name="Terret M.E."/>
            <person name="Ferby I."/>
            <person name="Nebreda A.R."/>
            <person name="Verlhac M.H."/>
        </authorList>
    </citation>
    <scope>FUNCTION</scope>
</reference>
<reference evidence="7" key="4">
    <citation type="journal article" date="2006" name="Genes Dev.">
        <title>Regulated Pumilio-2 binding controls RINGO/Spy mRNA translation and CPEB activation.</title>
        <authorList>
            <person name="Padmanabhan K."/>
            <person name="Richter J.D."/>
        </authorList>
    </citation>
    <scope>FUNCTION</scope>
    <scope>IDENTIFICATION IN A COMPLEX WITH EPBAP; DAZL AND PUM2</scope>
</reference>